<organism>
    <name type="scientific">Bartonella vinsonii subsp. berkhoffii</name>
    <dbReference type="NCBI Taxonomy" id="40933"/>
    <lineage>
        <taxon>Bacteria</taxon>
        <taxon>Pseudomonadati</taxon>
        <taxon>Pseudomonadota</taxon>
        <taxon>Alphaproteobacteria</taxon>
        <taxon>Hyphomicrobiales</taxon>
        <taxon>Bartonellaceae</taxon>
        <taxon>Bartonella</taxon>
    </lineage>
</organism>
<comment type="function">
    <text evidence="1">E2 component of the 2-oxoglutarate dehydrogenase (OGDH) complex which catalyzes the second step in the conversion of 2-oxoglutarate to succinyl-CoA and CO(2).</text>
</comment>
<comment type="catalytic activity">
    <reaction evidence="1">
        <text>N(6)-[(R)-dihydrolipoyl]-L-lysyl-[protein] + succinyl-CoA = N(6)-[(R)-S(8)-succinyldihydrolipoyl]-L-lysyl-[protein] + CoA</text>
        <dbReference type="Rhea" id="RHEA:15213"/>
        <dbReference type="Rhea" id="RHEA-COMP:10475"/>
        <dbReference type="Rhea" id="RHEA-COMP:20092"/>
        <dbReference type="ChEBI" id="CHEBI:57287"/>
        <dbReference type="ChEBI" id="CHEBI:57292"/>
        <dbReference type="ChEBI" id="CHEBI:83100"/>
        <dbReference type="ChEBI" id="CHEBI:83120"/>
        <dbReference type="EC" id="2.3.1.61"/>
    </reaction>
</comment>
<comment type="cofactor">
    <cofactor>
        <name>(R)-lipoate</name>
        <dbReference type="ChEBI" id="CHEBI:83088"/>
    </cofactor>
    <text>Binds 1 lipoyl cofactor covalently.</text>
</comment>
<comment type="pathway">
    <text>Amino-acid degradation; L-lysine degradation via saccharopine pathway; glutaryl-CoA from L-lysine: step 6/6.</text>
</comment>
<comment type="subunit">
    <text evidence="1">Forms a 24-polypeptide structural core with octahedral symmetry. Part of the 2-oxoglutarate dehydrogenase (OGDH) complex composed of E1 (2-oxoglutarate dehydrogenase), E2 (dihydrolipoamide succinyltransferase) and E3 (dihydrolipoamide dehydrogenase); the complex contains multiple copies of the three enzymatic components (E1, E2 and E3).</text>
</comment>
<comment type="similarity">
    <text evidence="5">Belongs to the 2-oxoacid dehydrogenase family.</text>
</comment>
<proteinExistence type="inferred from homology"/>
<evidence type="ECO:0000250" key="1">
    <source>
        <dbReference type="UniProtKB" id="P0AFG6"/>
    </source>
</evidence>
<evidence type="ECO:0000255" key="2">
    <source>
        <dbReference type="PROSITE-ProRule" id="PRU01066"/>
    </source>
</evidence>
<evidence type="ECO:0000255" key="3">
    <source>
        <dbReference type="PROSITE-ProRule" id="PRU01170"/>
    </source>
</evidence>
<evidence type="ECO:0000256" key="4">
    <source>
        <dbReference type="SAM" id="MobiDB-lite"/>
    </source>
</evidence>
<evidence type="ECO:0000305" key="5"/>
<dbReference type="EC" id="2.3.1.61" evidence="1"/>
<dbReference type="EMBL" id="AY160679">
    <property type="protein sequence ID" value="AAN78227.1"/>
    <property type="molecule type" value="Genomic_DNA"/>
</dbReference>
<dbReference type="SMR" id="Q8GCY1"/>
<dbReference type="BRENDA" id="2.3.1.61">
    <property type="organism ID" value="7855"/>
</dbReference>
<dbReference type="UniPathway" id="UPA00868">
    <property type="reaction ID" value="UER00840"/>
</dbReference>
<dbReference type="GO" id="GO:0005829">
    <property type="term" value="C:cytosol"/>
    <property type="evidence" value="ECO:0007669"/>
    <property type="project" value="TreeGrafter"/>
</dbReference>
<dbReference type="GO" id="GO:0045252">
    <property type="term" value="C:oxoglutarate dehydrogenase complex"/>
    <property type="evidence" value="ECO:0007669"/>
    <property type="project" value="InterPro"/>
</dbReference>
<dbReference type="GO" id="GO:0004149">
    <property type="term" value="F:dihydrolipoyllysine-residue succinyltransferase activity"/>
    <property type="evidence" value="ECO:0007669"/>
    <property type="project" value="UniProtKB-EC"/>
</dbReference>
<dbReference type="GO" id="GO:0033512">
    <property type="term" value="P:L-lysine catabolic process to acetyl-CoA via saccharopine"/>
    <property type="evidence" value="ECO:0007669"/>
    <property type="project" value="UniProtKB-UniPathway"/>
</dbReference>
<dbReference type="GO" id="GO:0006099">
    <property type="term" value="P:tricarboxylic acid cycle"/>
    <property type="evidence" value="ECO:0007669"/>
    <property type="project" value="UniProtKB-KW"/>
</dbReference>
<dbReference type="CDD" id="cd06849">
    <property type="entry name" value="lipoyl_domain"/>
    <property type="match status" value="1"/>
</dbReference>
<dbReference type="FunFam" id="3.30.559.10:FF:000007">
    <property type="entry name" value="Dihydrolipoamide acetyltransferase component of pyruvate dehydrogenase complex"/>
    <property type="match status" value="1"/>
</dbReference>
<dbReference type="Gene3D" id="2.40.50.100">
    <property type="match status" value="1"/>
</dbReference>
<dbReference type="Gene3D" id="3.30.559.10">
    <property type="entry name" value="Chloramphenicol acetyltransferase-like domain"/>
    <property type="match status" value="1"/>
</dbReference>
<dbReference type="Gene3D" id="4.10.320.10">
    <property type="entry name" value="E3-binding domain"/>
    <property type="match status" value="1"/>
</dbReference>
<dbReference type="InterPro" id="IPR003016">
    <property type="entry name" value="2-oxoA_DH_lipoyl-BS"/>
</dbReference>
<dbReference type="InterPro" id="IPR050537">
    <property type="entry name" value="2-oxoacid_dehydrogenase"/>
</dbReference>
<dbReference type="InterPro" id="IPR001078">
    <property type="entry name" value="2-oxoacid_DH_actylTfrase"/>
</dbReference>
<dbReference type="InterPro" id="IPR000089">
    <property type="entry name" value="Biotin_lipoyl"/>
</dbReference>
<dbReference type="InterPro" id="IPR023213">
    <property type="entry name" value="CAT-like_dom_sf"/>
</dbReference>
<dbReference type="InterPro" id="IPR036625">
    <property type="entry name" value="E3-bd_dom_sf"/>
</dbReference>
<dbReference type="InterPro" id="IPR004167">
    <property type="entry name" value="PSBD"/>
</dbReference>
<dbReference type="InterPro" id="IPR011053">
    <property type="entry name" value="Single_hybrid_motif"/>
</dbReference>
<dbReference type="InterPro" id="IPR006255">
    <property type="entry name" value="SucB"/>
</dbReference>
<dbReference type="NCBIfam" id="NF004309">
    <property type="entry name" value="PRK05704.1"/>
    <property type="match status" value="1"/>
</dbReference>
<dbReference type="NCBIfam" id="TIGR01347">
    <property type="entry name" value="sucB"/>
    <property type="match status" value="1"/>
</dbReference>
<dbReference type="PANTHER" id="PTHR43416:SF5">
    <property type="entry name" value="DIHYDROLIPOYLLYSINE-RESIDUE SUCCINYLTRANSFERASE COMPONENT OF 2-OXOGLUTARATE DEHYDROGENASE COMPLEX, MITOCHONDRIAL"/>
    <property type="match status" value="1"/>
</dbReference>
<dbReference type="PANTHER" id="PTHR43416">
    <property type="entry name" value="DIHYDROLIPOYLLYSINE-RESIDUE SUCCINYLTRANSFERASE COMPONENT OF 2-OXOGLUTARATE DEHYDROGENASE COMPLEX, MITOCHONDRIAL-RELATED"/>
    <property type="match status" value="1"/>
</dbReference>
<dbReference type="Pfam" id="PF00198">
    <property type="entry name" value="2-oxoacid_dh"/>
    <property type="match status" value="1"/>
</dbReference>
<dbReference type="Pfam" id="PF00364">
    <property type="entry name" value="Biotin_lipoyl"/>
    <property type="match status" value="1"/>
</dbReference>
<dbReference type="Pfam" id="PF02817">
    <property type="entry name" value="E3_binding"/>
    <property type="match status" value="1"/>
</dbReference>
<dbReference type="SUPFAM" id="SSF52777">
    <property type="entry name" value="CoA-dependent acyltransferases"/>
    <property type="match status" value="1"/>
</dbReference>
<dbReference type="SUPFAM" id="SSF47005">
    <property type="entry name" value="Peripheral subunit-binding domain of 2-oxo acid dehydrogenase complex"/>
    <property type="match status" value="1"/>
</dbReference>
<dbReference type="SUPFAM" id="SSF51230">
    <property type="entry name" value="Single hybrid motif"/>
    <property type="match status" value="1"/>
</dbReference>
<dbReference type="PROSITE" id="PS50968">
    <property type="entry name" value="BIOTINYL_LIPOYL"/>
    <property type="match status" value="1"/>
</dbReference>
<dbReference type="PROSITE" id="PS00189">
    <property type="entry name" value="LIPOYL"/>
    <property type="match status" value="1"/>
</dbReference>
<dbReference type="PROSITE" id="PS51826">
    <property type="entry name" value="PSBD"/>
    <property type="match status" value="1"/>
</dbReference>
<name>ODO2_BARVB</name>
<gene>
    <name type="primary">sucB</name>
</gene>
<keyword id="KW-0012">Acyltransferase</keyword>
<keyword id="KW-0450">Lipoyl</keyword>
<keyword id="KW-0808">Transferase</keyword>
<keyword id="KW-0816">Tricarboxylic acid cycle</keyword>
<sequence>MTTEIRVPTLGESVTEATVGKWFKKLGEAVAIDEPLVELETDKVTVEVPSPVAGKLFEIIAKEGDTVEVNALLGAVEAGAASVAKSPSSSETSVSAAPSELEQSSSSNTMPPAPSAAKLMAENNIAKSDILGSGKRGQILKEDVLNVLAQGVKTSPPAVSASSSTPVSVSSSAVAPVQEMREERVRMTKLRQTIARRLKDAQNTAAMLTTFNEVDMSAVMGLRKRYKDLFEKKHGVKLGFMGFFTKAVCHALKELPAVNAEIDGTDIIYKNYVNAGIAVGTDKGLVVPVVRDADQMSLAEIEKEIGRLGRLARDGKLAVSDMQGGTFTITNGGVYGSLMSTPILNAPQSGILGMHAIKERAMVVDGQIAIRPMMYLALSYDHRIVDGQEAVTFLVRVKESLEDPERLVLDL</sequence>
<accession>Q8GCY1</accession>
<reference key="1">
    <citation type="journal article" date="2003" name="Infect. Immun.">
        <title>Molecular characterization of the sucB gene encoding the immunogenic dihydrolipoamide succinyltransferase protein of Bartonella vinsonii subsp. berkhoffii and Bartonella quintana.</title>
        <authorList>
            <person name="Gilmore R.D. Jr."/>
            <person name="Carpio A.M."/>
            <person name="Kosoy M.Y."/>
            <person name="Gage K.L."/>
        </authorList>
    </citation>
    <scope>NUCLEOTIDE SEQUENCE [GENOMIC DNA]</scope>
</reference>
<protein>
    <recommendedName>
        <fullName>Dihydrolipoyllysine-residue succinyltransferase component of 2-oxoglutarate dehydrogenase complex</fullName>
        <ecNumber evidence="1">2.3.1.61</ecNumber>
    </recommendedName>
    <alternativeName>
        <fullName>2-oxoglutarate dehydrogenase complex component E2</fullName>
        <shortName>OGDC-E2</shortName>
    </alternativeName>
    <alternativeName>
        <fullName>Dihydrolipoamide succinyltransferase component of 2-oxoglutarate dehydrogenase complex</fullName>
    </alternativeName>
</protein>
<feature type="chain" id="PRO_0000162258" description="Dihydrolipoyllysine-residue succinyltransferase component of 2-oxoglutarate dehydrogenase complex">
    <location>
        <begin position="1"/>
        <end position="411"/>
    </location>
</feature>
<feature type="domain" description="Lipoyl-binding" evidence="2">
    <location>
        <begin position="2"/>
        <end position="77"/>
    </location>
</feature>
<feature type="domain" description="Peripheral subunit-binding (PSBD)" evidence="3">
    <location>
        <begin position="111"/>
        <end position="148"/>
    </location>
</feature>
<feature type="region of interest" description="Disordered" evidence="4">
    <location>
        <begin position="82"/>
        <end position="115"/>
    </location>
</feature>
<feature type="compositionally biased region" description="Low complexity" evidence="4">
    <location>
        <begin position="82"/>
        <end position="100"/>
    </location>
</feature>
<feature type="compositionally biased region" description="Polar residues" evidence="4">
    <location>
        <begin position="101"/>
        <end position="110"/>
    </location>
</feature>
<feature type="active site" evidence="1">
    <location>
        <position position="382"/>
    </location>
</feature>
<feature type="active site" evidence="1">
    <location>
        <position position="386"/>
    </location>
</feature>
<feature type="modified residue" description="N6-lipoyllysine" evidence="2">
    <location>
        <position position="43"/>
    </location>
</feature>